<feature type="chain" id="PRO_0000215047" description="Protein AaeX">
    <location>
        <begin position="1"/>
        <end position="67"/>
    </location>
</feature>
<feature type="transmembrane region" description="Helical" evidence="1">
    <location>
        <begin position="10"/>
        <end position="30"/>
    </location>
</feature>
<feature type="transmembrane region" description="Helical" evidence="1">
    <location>
        <begin position="43"/>
        <end position="63"/>
    </location>
</feature>
<sequence length="67" mass="7760">MSSLPVMVLFGLSFPPVFFVLMVSLTLFFVVNRLLQPTGIYDFVWHPALFNSALFCCLFYLLFRYGL</sequence>
<comment type="subcellular location">
    <subcellularLocation>
        <location evidence="1">Cell membrane</location>
        <topology evidence="1">Multi-pass membrane protein</topology>
    </subcellularLocation>
</comment>
<comment type="similarity">
    <text evidence="1">Belongs to the AaeX family.</text>
</comment>
<name>AAEX_PECAS</name>
<gene>
    <name evidence="1" type="primary">aaeX</name>
    <name type="ordered locus">ECA0277</name>
</gene>
<reference key="1">
    <citation type="journal article" date="2004" name="Proc. Natl. Acad. Sci. U.S.A.">
        <title>Genome sequence of the enterobacterial phytopathogen Erwinia carotovora subsp. atroseptica and characterization of virulence factors.</title>
        <authorList>
            <person name="Bell K.S."/>
            <person name="Sebaihia M."/>
            <person name="Pritchard L."/>
            <person name="Holden M.T.G."/>
            <person name="Hyman L.J."/>
            <person name="Holeva M.C."/>
            <person name="Thomson N.R."/>
            <person name="Bentley S.D."/>
            <person name="Churcher L.J.C."/>
            <person name="Mungall K."/>
            <person name="Atkin R."/>
            <person name="Bason N."/>
            <person name="Brooks K."/>
            <person name="Chillingworth T."/>
            <person name="Clark K."/>
            <person name="Doggett J."/>
            <person name="Fraser A."/>
            <person name="Hance Z."/>
            <person name="Hauser H."/>
            <person name="Jagels K."/>
            <person name="Moule S."/>
            <person name="Norbertczak H."/>
            <person name="Ormond D."/>
            <person name="Price C."/>
            <person name="Quail M.A."/>
            <person name="Sanders M."/>
            <person name="Walker D."/>
            <person name="Whitehead S."/>
            <person name="Salmond G.P.C."/>
            <person name="Birch P.R.J."/>
            <person name="Parkhill J."/>
            <person name="Toth I.K."/>
        </authorList>
    </citation>
    <scope>NUCLEOTIDE SEQUENCE [LARGE SCALE GENOMIC DNA]</scope>
    <source>
        <strain>SCRI 1043 / ATCC BAA-672</strain>
    </source>
</reference>
<keyword id="KW-1003">Cell membrane</keyword>
<keyword id="KW-0472">Membrane</keyword>
<keyword id="KW-1185">Reference proteome</keyword>
<keyword id="KW-0812">Transmembrane</keyword>
<keyword id="KW-1133">Transmembrane helix</keyword>
<evidence type="ECO:0000255" key="1">
    <source>
        <dbReference type="HAMAP-Rule" id="MF_01546"/>
    </source>
</evidence>
<protein>
    <recommendedName>
        <fullName evidence="1">Protein AaeX</fullName>
    </recommendedName>
</protein>
<dbReference type="EMBL" id="BX950851">
    <property type="protein sequence ID" value="CAG73197.1"/>
    <property type="molecule type" value="Genomic_DNA"/>
</dbReference>
<dbReference type="RefSeq" id="WP_011091911.1">
    <property type="nucleotide sequence ID" value="NC_004547.2"/>
</dbReference>
<dbReference type="STRING" id="218491.ECA0277"/>
<dbReference type="TCDB" id="8.A.48.1.5">
    <property type="family name" value="the putative auxiliary aromatic acid exporter (aaex) family"/>
</dbReference>
<dbReference type="GeneID" id="57207150"/>
<dbReference type="KEGG" id="eca:ECA0277"/>
<dbReference type="PATRIC" id="fig|218491.5.peg.279"/>
<dbReference type="eggNOG" id="ENOG5032YJX">
    <property type="taxonomic scope" value="Bacteria"/>
</dbReference>
<dbReference type="HOGENOM" id="CLU_188292_0_0_6"/>
<dbReference type="OrthoDB" id="6080293at2"/>
<dbReference type="Proteomes" id="UP000007966">
    <property type="component" value="Chromosome"/>
</dbReference>
<dbReference type="GO" id="GO:0005886">
    <property type="term" value="C:plasma membrane"/>
    <property type="evidence" value="ECO:0007669"/>
    <property type="project" value="UniProtKB-SubCell"/>
</dbReference>
<dbReference type="HAMAP" id="MF_01546">
    <property type="entry name" value="AaeX"/>
    <property type="match status" value="1"/>
</dbReference>
<dbReference type="InterPro" id="IPR012451">
    <property type="entry name" value="DUF1656"/>
</dbReference>
<dbReference type="NCBIfam" id="NF008615">
    <property type="entry name" value="PRK11594.1"/>
    <property type="match status" value="1"/>
</dbReference>
<dbReference type="Pfam" id="PF07869">
    <property type="entry name" value="DUF1656"/>
    <property type="match status" value="1"/>
</dbReference>
<organism>
    <name type="scientific">Pectobacterium atrosepticum (strain SCRI 1043 / ATCC BAA-672)</name>
    <name type="common">Erwinia carotovora subsp. atroseptica</name>
    <dbReference type="NCBI Taxonomy" id="218491"/>
    <lineage>
        <taxon>Bacteria</taxon>
        <taxon>Pseudomonadati</taxon>
        <taxon>Pseudomonadota</taxon>
        <taxon>Gammaproteobacteria</taxon>
        <taxon>Enterobacterales</taxon>
        <taxon>Pectobacteriaceae</taxon>
        <taxon>Pectobacterium</taxon>
    </lineage>
</organism>
<accession>Q6DAH6</accession>
<proteinExistence type="inferred from homology"/>